<proteinExistence type="inferred from homology"/>
<accession>A8ZV75</accession>
<protein>
    <recommendedName>
        <fullName evidence="1">Large ribosomal subunit protein uL30</fullName>
    </recommendedName>
    <alternativeName>
        <fullName evidence="2">50S ribosomal protein L30</fullName>
    </alternativeName>
</protein>
<evidence type="ECO:0000255" key="1">
    <source>
        <dbReference type="HAMAP-Rule" id="MF_01371"/>
    </source>
</evidence>
<evidence type="ECO:0000305" key="2"/>
<feature type="chain" id="PRO_0000347096" description="Large ribosomal subunit protein uL30">
    <location>
        <begin position="1"/>
        <end position="65"/>
    </location>
</feature>
<dbReference type="EMBL" id="CP000859">
    <property type="protein sequence ID" value="ABW66536.1"/>
    <property type="status" value="ALT_INIT"/>
    <property type="molecule type" value="Genomic_DNA"/>
</dbReference>
<dbReference type="RefSeq" id="WP_041280334.1">
    <property type="nucleotide sequence ID" value="NC_009943.1"/>
</dbReference>
<dbReference type="SMR" id="A8ZV75"/>
<dbReference type="STRING" id="96561.Dole_0726"/>
<dbReference type="KEGG" id="dol:Dole_0726"/>
<dbReference type="eggNOG" id="COG1841">
    <property type="taxonomic scope" value="Bacteria"/>
</dbReference>
<dbReference type="HOGENOM" id="CLU_131047_1_3_7"/>
<dbReference type="OrthoDB" id="9812790at2"/>
<dbReference type="Proteomes" id="UP000008561">
    <property type="component" value="Chromosome"/>
</dbReference>
<dbReference type="GO" id="GO:0022625">
    <property type="term" value="C:cytosolic large ribosomal subunit"/>
    <property type="evidence" value="ECO:0007669"/>
    <property type="project" value="TreeGrafter"/>
</dbReference>
<dbReference type="GO" id="GO:0003735">
    <property type="term" value="F:structural constituent of ribosome"/>
    <property type="evidence" value="ECO:0007669"/>
    <property type="project" value="InterPro"/>
</dbReference>
<dbReference type="GO" id="GO:0006412">
    <property type="term" value="P:translation"/>
    <property type="evidence" value="ECO:0007669"/>
    <property type="project" value="InterPro"/>
</dbReference>
<dbReference type="CDD" id="cd01658">
    <property type="entry name" value="Ribosomal_L30"/>
    <property type="match status" value="1"/>
</dbReference>
<dbReference type="FunFam" id="3.30.1390.20:FF:000001">
    <property type="entry name" value="50S ribosomal protein L30"/>
    <property type="match status" value="1"/>
</dbReference>
<dbReference type="Gene3D" id="3.30.1390.20">
    <property type="entry name" value="Ribosomal protein L30, ferredoxin-like fold domain"/>
    <property type="match status" value="1"/>
</dbReference>
<dbReference type="HAMAP" id="MF_01371_B">
    <property type="entry name" value="Ribosomal_uL30_B"/>
    <property type="match status" value="1"/>
</dbReference>
<dbReference type="InterPro" id="IPR036919">
    <property type="entry name" value="Ribo_uL30_ferredoxin-like_sf"/>
</dbReference>
<dbReference type="InterPro" id="IPR005996">
    <property type="entry name" value="Ribosomal_uL30_bac-type"/>
</dbReference>
<dbReference type="InterPro" id="IPR016082">
    <property type="entry name" value="Ribosomal_uL30_ferredoxin-like"/>
</dbReference>
<dbReference type="NCBIfam" id="TIGR01308">
    <property type="entry name" value="rpmD_bact"/>
    <property type="match status" value="1"/>
</dbReference>
<dbReference type="PANTHER" id="PTHR15892:SF2">
    <property type="entry name" value="LARGE RIBOSOMAL SUBUNIT PROTEIN UL30M"/>
    <property type="match status" value="1"/>
</dbReference>
<dbReference type="PANTHER" id="PTHR15892">
    <property type="entry name" value="MITOCHONDRIAL RIBOSOMAL PROTEIN L30"/>
    <property type="match status" value="1"/>
</dbReference>
<dbReference type="Pfam" id="PF00327">
    <property type="entry name" value="Ribosomal_L30"/>
    <property type="match status" value="1"/>
</dbReference>
<dbReference type="PIRSF" id="PIRSF002211">
    <property type="entry name" value="Ribosomal_L30_bac-type"/>
    <property type="match status" value="1"/>
</dbReference>
<dbReference type="SUPFAM" id="SSF55129">
    <property type="entry name" value="Ribosomal protein L30p/L7e"/>
    <property type="match status" value="1"/>
</dbReference>
<name>RL30_DESOH</name>
<organism>
    <name type="scientific">Desulfosudis oleivorans (strain DSM 6200 / JCM 39069 / Hxd3)</name>
    <name type="common">Desulfococcus oleovorans</name>
    <dbReference type="NCBI Taxonomy" id="96561"/>
    <lineage>
        <taxon>Bacteria</taxon>
        <taxon>Pseudomonadati</taxon>
        <taxon>Thermodesulfobacteriota</taxon>
        <taxon>Desulfobacteria</taxon>
        <taxon>Desulfobacterales</taxon>
        <taxon>Desulfosudaceae</taxon>
        <taxon>Desulfosudis</taxon>
    </lineage>
</organism>
<comment type="subunit">
    <text evidence="1">Part of the 50S ribosomal subunit.</text>
</comment>
<comment type="similarity">
    <text evidence="1">Belongs to the universal ribosomal protein uL30 family.</text>
</comment>
<comment type="sequence caution" evidence="2">
    <conflict type="erroneous initiation">
        <sequence resource="EMBL-CDS" id="ABW66536"/>
    </conflict>
</comment>
<gene>
    <name evidence="1" type="primary">rpmD</name>
    <name type="ordered locus">Dole_0726</name>
</gene>
<sequence length="65" mass="7176">MSGSIKVTLAKSMIGRPEKHRKVLRAMGLTKVNRTVCLQDTPTVQGMIRKVSHLLRVEESADGSE</sequence>
<reference key="1">
    <citation type="submission" date="2007-10" db="EMBL/GenBank/DDBJ databases">
        <title>Complete sequence of Desulfococcus oleovorans Hxd3.</title>
        <authorList>
            <consortium name="US DOE Joint Genome Institute"/>
            <person name="Copeland A."/>
            <person name="Lucas S."/>
            <person name="Lapidus A."/>
            <person name="Barry K."/>
            <person name="Glavina del Rio T."/>
            <person name="Dalin E."/>
            <person name="Tice H."/>
            <person name="Pitluck S."/>
            <person name="Kiss H."/>
            <person name="Brettin T."/>
            <person name="Bruce D."/>
            <person name="Detter J.C."/>
            <person name="Han C."/>
            <person name="Schmutz J."/>
            <person name="Larimer F."/>
            <person name="Land M."/>
            <person name="Hauser L."/>
            <person name="Kyrpides N."/>
            <person name="Kim E."/>
            <person name="Wawrik B."/>
            <person name="Richardson P."/>
        </authorList>
    </citation>
    <scope>NUCLEOTIDE SEQUENCE [LARGE SCALE GENOMIC DNA]</scope>
    <source>
        <strain>DSM 6200 / JCM 39069 / Hxd3</strain>
    </source>
</reference>
<keyword id="KW-1185">Reference proteome</keyword>
<keyword id="KW-0687">Ribonucleoprotein</keyword>
<keyword id="KW-0689">Ribosomal protein</keyword>